<evidence type="ECO:0000250" key="1"/>
<evidence type="ECO:0000255" key="2">
    <source>
        <dbReference type="PROSITE-ProRule" id="PRU00711"/>
    </source>
</evidence>
<reference key="1">
    <citation type="journal article" date="1992" name="Eur. J. Biochem.">
        <title>Cloning and nucleotide sequence of the psrA gene of Wolinella succinogenes polysulphide reductase.</title>
        <authorList>
            <person name="Krafft T."/>
            <person name="Bokranz M."/>
            <person name="Klimmek O."/>
            <person name="Schroeder I."/>
            <person name="Fahrenholz F."/>
            <person name="Kojro E."/>
            <person name="Kroeger A."/>
        </authorList>
    </citation>
    <scope>NUCLEOTIDE SEQUENCE [GENOMIC DNA]</scope>
</reference>
<reference key="2">
    <citation type="journal article" date="2003" name="Proc. Natl. Acad. Sci. U.S.A.">
        <title>Complete genome sequence and analysis of Wolinella succinogenes.</title>
        <authorList>
            <person name="Baar C."/>
            <person name="Eppinger M."/>
            <person name="Raddatz G."/>
            <person name="Simon J."/>
            <person name="Lanz C."/>
            <person name="Klimmek O."/>
            <person name="Nandakumar R."/>
            <person name="Gross R."/>
            <person name="Rosinus A."/>
            <person name="Keller H."/>
            <person name="Jagtap P."/>
            <person name="Linke B."/>
            <person name="Meyer F."/>
            <person name="Lederer H."/>
            <person name="Schuster S.C."/>
        </authorList>
    </citation>
    <scope>NUCLEOTIDE SEQUENCE [LARGE SCALE GENOMIC DNA]</scope>
    <source>
        <strain>ATCC 29543 / DSM 1740 / CCUG 13145 / JCM 31913 / LMG 7466 / NCTC 11488 / FDC 602W</strain>
    </source>
</reference>
<protein>
    <recommendedName>
        <fullName>Polysulfide reductase chain B</fullName>
    </recommendedName>
    <alternativeName>
        <fullName>Sulfur reductase chain B</fullName>
    </alternativeName>
</protein>
<comment type="function">
    <text>Component of the phosphorylative electron transport system with polysulfide as the terminal acceptor.</text>
</comment>
<comment type="subunit">
    <text>Functional polysulfide reductase is made up of three different (A, B, and C) subunits.</text>
</comment>
<organism>
    <name type="scientific">Wolinella succinogenes (strain ATCC 29543 / DSM 1740 / CCUG 13145 / JCM 31913 / LMG 7466 / NCTC 11488 / FDC 602W)</name>
    <name type="common">Vibrio succinogenes</name>
    <dbReference type="NCBI Taxonomy" id="273121"/>
    <lineage>
        <taxon>Bacteria</taxon>
        <taxon>Pseudomonadati</taxon>
        <taxon>Campylobacterota</taxon>
        <taxon>Epsilonproteobacteria</taxon>
        <taxon>Campylobacterales</taxon>
        <taxon>Helicobacteraceae</taxon>
        <taxon>Wolinella</taxon>
    </lineage>
</organism>
<accession>P31076</accession>
<keyword id="KW-0004">4Fe-4S</keyword>
<keyword id="KW-0249">Electron transport</keyword>
<keyword id="KW-0408">Iron</keyword>
<keyword id="KW-0411">Iron-sulfur</keyword>
<keyword id="KW-0479">Metal-binding</keyword>
<keyword id="KW-0560">Oxidoreductase</keyword>
<keyword id="KW-1185">Reference proteome</keyword>
<keyword id="KW-0677">Repeat</keyword>
<keyword id="KW-0813">Transport</keyword>
<dbReference type="EMBL" id="X65042">
    <property type="protein sequence ID" value="CAA46177.1"/>
    <property type="molecule type" value="Genomic_DNA"/>
</dbReference>
<dbReference type="EMBL" id="BX571657">
    <property type="protein sequence ID" value="CAE09282.1"/>
    <property type="molecule type" value="Genomic_DNA"/>
</dbReference>
<dbReference type="PIR" id="S23458">
    <property type="entry name" value="S23458"/>
</dbReference>
<dbReference type="RefSeq" id="WP_011138082.1">
    <property type="nucleotide sequence ID" value="NC_005090.1"/>
</dbReference>
<dbReference type="SMR" id="P31076"/>
<dbReference type="STRING" id="273121.WS0117"/>
<dbReference type="TCDB" id="5.A.3.5.2">
    <property type="family name" value="the prokaryotic molybdopterin-containing oxidoreductase (pmo) family"/>
</dbReference>
<dbReference type="KEGG" id="wsu:WS0117"/>
<dbReference type="eggNOG" id="COG0437">
    <property type="taxonomic scope" value="Bacteria"/>
</dbReference>
<dbReference type="HOGENOM" id="CLU_043374_1_3_7"/>
<dbReference type="BioCyc" id="MetaCyc:MONOMER-12582"/>
<dbReference type="Proteomes" id="UP000000422">
    <property type="component" value="Chromosome"/>
</dbReference>
<dbReference type="GO" id="GO:0051539">
    <property type="term" value="F:4 iron, 4 sulfur cluster binding"/>
    <property type="evidence" value="ECO:0007669"/>
    <property type="project" value="UniProtKB-KW"/>
</dbReference>
<dbReference type="GO" id="GO:0046872">
    <property type="term" value="F:metal ion binding"/>
    <property type="evidence" value="ECO:0007669"/>
    <property type="project" value="UniProtKB-KW"/>
</dbReference>
<dbReference type="GO" id="GO:0016491">
    <property type="term" value="F:oxidoreductase activity"/>
    <property type="evidence" value="ECO:0007669"/>
    <property type="project" value="UniProtKB-KW"/>
</dbReference>
<dbReference type="CDD" id="cd10551">
    <property type="entry name" value="PsrB"/>
    <property type="match status" value="1"/>
</dbReference>
<dbReference type="Gene3D" id="3.30.70.20">
    <property type="match status" value="2"/>
</dbReference>
<dbReference type="InterPro" id="IPR017896">
    <property type="entry name" value="4Fe4S_Fe-S-bd"/>
</dbReference>
<dbReference type="InterPro" id="IPR017900">
    <property type="entry name" value="4Fe4S_Fe_S_CS"/>
</dbReference>
<dbReference type="InterPro" id="IPR050954">
    <property type="entry name" value="ET_IronSulfur_Cluster-Binding"/>
</dbReference>
<dbReference type="PANTHER" id="PTHR43177">
    <property type="entry name" value="PROTEIN NRFC"/>
    <property type="match status" value="1"/>
</dbReference>
<dbReference type="PANTHER" id="PTHR43177:SF3">
    <property type="entry name" value="PROTEIN NRFC HOMOLOG"/>
    <property type="match status" value="1"/>
</dbReference>
<dbReference type="Pfam" id="PF13247">
    <property type="entry name" value="Fer4_11"/>
    <property type="match status" value="1"/>
</dbReference>
<dbReference type="SUPFAM" id="SSF54862">
    <property type="entry name" value="4Fe-4S ferredoxins"/>
    <property type="match status" value="1"/>
</dbReference>
<dbReference type="PROSITE" id="PS00198">
    <property type="entry name" value="4FE4S_FER_1"/>
    <property type="match status" value="1"/>
</dbReference>
<dbReference type="PROSITE" id="PS51379">
    <property type="entry name" value="4FE4S_FER_2"/>
    <property type="match status" value="3"/>
</dbReference>
<proteinExistence type="predicted"/>
<feature type="chain" id="PRO_0000159274" description="Polysulfide reductase chain B">
    <location>
        <begin position="1"/>
        <end position="191"/>
    </location>
</feature>
<feature type="domain" description="4Fe-4S ferredoxin-type 1" evidence="2">
    <location>
        <begin position="5"/>
        <end position="34"/>
    </location>
</feature>
<feature type="domain" description="4Fe-4S ferredoxin-type 2" evidence="2">
    <location>
        <begin position="50"/>
        <end position="83"/>
    </location>
</feature>
<feature type="domain" description="4Fe-4S ferredoxin-type 3" evidence="2">
    <location>
        <begin position="84"/>
        <end position="113"/>
    </location>
</feature>
<feature type="binding site" evidence="1">
    <location>
        <position position="14"/>
    </location>
    <ligand>
        <name>[4Fe-4S] cluster</name>
        <dbReference type="ChEBI" id="CHEBI:49883"/>
        <label>1</label>
    </ligand>
</feature>
<feature type="binding site" evidence="1">
    <location>
        <position position="17"/>
    </location>
    <ligand>
        <name>[4Fe-4S] cluster</name>
        <dbReference type="ChEBI" id="CHEBI:49883"/>
        <label>1</label>
    </ligand>
</feature>
<feature type="binding site" evidence="1">
    <location>
        <position position="20"/>
    </location>
    <ligand>
        <name>[4Fe-4S] cluster</name>
        <dbReference type="ChEBI" id="CHEBI:49883"/>
        <label>1</label>
    </ligand>
</feature>
<feature type="binding site" evidence="1">
    <location>
        <position position="24"/>
    </location>
    <ligand>
        <name>[4Fe-4S] cluster</name>
        <dbReference type="ChEBI" id="CHEBI:49883"/>
        <label>2</label>
    </ligand>
</feature>
<feature type="binding site" evidence="1">
    <location>
        <position position="61"/>
    </location>
    <ligand>
        <name>[4Fe-4S] cluster</name>
        <dbReference type="ChEBI" id="CHEBI:49883"/>
        <label>3</label>
    </ligand>
</feature>
<feature type="binding site" evidence="1">
    <location>
        <position position="64"/>
    </location>
    <ligand>
        <name>[4Fe-4S] cluster</name>
        <dbReference type="ChEBI" id="CHEBI:49883"/>
        <label>3</label>
    </ligand>
</feature>
<feature type="binding site" evidence="1">
    <location>
        <position position="69"/>
    </location>
    <ligand>
        <name>[4Fe-4S] cluster</name>
        <dbReference type="ChEBI" id="CHEBI:49883"/>
        <label>3</label>
    </ligand>
</feature>
<feature type="binding site" evidence="1">
    <location>
        <position position="73"/>
    </location>
    <ligand>
        <name>[4Fe-4S] cluster</name>
        <dbReference type="ChEBI" id="CHEBI:49883"/>
        <label>4</label>
    </ligand>
</feature>
<feature type="binding site" evidence="1">
    <location>
        <position position="93"/>
    </location>
    <ligand>
        <name>[4Fe-4S] cluster</name>
        <dbReference type="ChEBI" id="CHEBI:49883"/>
        <label>4</label>
    </ligand>
</feature>
<feature type="binding site" evidence="1">
    <location>
        <position position="96"/>
    </location>
    <ligand>
        <name>[4Fe-4S] cluster</name>
        <dbReference type="ChEBI" id="CHEBI:49883"/>
        <label>4</label>
    </ligand>
</feature>
<feature type="binding site" evidence="1">
    <location>
        <position position="99"/>
    </location>
    <ligand>
        <name>[4Fe-4S] cluster</name>
        <dbReference type="ChEBI" id="CHEBI:49883"/>
        <label>4</label>
    </ligand>
</feature>
<feature type="binding site" evidence="1">
    <location>
        <position position="103"/>
    </location>
    <ligand>
        <name>[4Fe-4S] cluster</name>
        <dbReference type="ChEBI" id="CHEBI:49883"/>
        <label>3</label>
    </ligand>
</feature>
<feature type="binding site" evidence="1">
    <location>
        <position position="120"/>
    </location>
    <ligand>
        <name>[4Fe-4S] cluster</name>
        <dbReference type="ChEBI" id="CHEBI:49883"/>
        <label>2</label>
    </ligand>
</feature>
<feature type="binding site" evidence="1">
    <location>
        <position position="123"/>
    </location>
    <ligand>
        <name>[4Fe-4S] cluster</name>
        <dbReference type="ChEBI" id="CHEBI:49883"/>
        <label>2</label>
    </ligand>
</feature>
<feature type="binding site" evidence="1">
    <location>
        <position position="136"/>
    </location>
    <ligand>
        <name>[4Fe-4S] cluster</name>
        <dbReference type="ChEBI" id="CHEBI:49883"/>
        <label>2</label>
    </ligand>
</feature>
<feature type="binding site" evidence="1">
    <location>
        <position position="140"/>
    </location>
    <ligand>
        <name>[4Fe-4S] cluster</name>
        <dbReference type="ChEBI" id="CHEBI:49883"/>
        <label>1</label>
    </ligand>
</feature>
<gene>
    <name type="primary">psrB</name>
    <name type="ordered locus">WS0117</name>
</gene>
<name>PSRB_WOLSU</name>
<sequence>MAKKYGMIHDENLCIGCQACNIACRSENKIPDSVYRLQVWVQGPKKLPDGTLSFNYHRQSCVQCENTPCVSVCPTKASYVNEDGIVSVNVDLCVGCLYCIAACPYQARYVDPVTKAPDKCNFCKDTRLARGEEPACVTVCPTDALTFGDMSDPKSKINKVLASKPTLRPKESLGTKPKLFIVPNKRGGIES</sequence>